<protein>
    <recommendedName>
        <fullName evidence="1">Probable 4-deoxy-4-formamido-L-arabinose-phosphoundecaprenol deformylase ArnD</fullName>
        <ecNumber evidence="1">3.5.1.n3</ecNumber>
    </recommendedName>
</protein>
<comment type="function">
    <text evidence="1">Catalyzes the deformylation of 4-deoxy-4-formamido-L-arabinose-phosphoundecaprenol to 4-amino-4-deoxy-L-arabinose-phosphoundecaprenol. The modified arabinose is attached to lipid A and is required for resistance to polymyxin and cationic antimicrobial peptides.</text>
</comment>
<comment type="catalytic activity">
    <reaction evidence="1">
        <text>4-deoxy-4-formamido-alpha-L-arabinopyranosyl di-trans,octa-cis-undecaprenyl phosphate + H2O = 4-amino-4-deoxy-alpha-L-arabinopyranosyl di-trans,octa-cis-undecaprenyl phosphate + formate</text>
        <dbReference type="Rhea" id="RHEA:27734"/>
        <dbReference type="ChEBI" id="CHEBI:15377"/>
        <dbReference type="ChEBI" id="CHEBI:15740"/>
        <dbReference type="ChEBI" id="CHEBI:58909"/>
        <dbReference type="ChEBI" id="CHEBI:60463"/>
        <dbReference type="EC" id="3.5.1.n3"/>
    </reaction>
</comment>
<comment type="pathway">
    <text evidence="1">Glycolipid biosynthesis; 4-amino-4-deoxy-alpha-L-arabinose undecaprenyl phosphate biosynthesis; 4-amino-4-deoxy-alpha-L-arabinose undecaprenyl phosphate from UDP-4-deoxy-4-formamido-beta-L-arabinose and undecaprenyl phosphate: step 2/2.</text>
</comment>
<comment type="pathway">
    <text evidence="1">Bacterial outer membrane biogenesis; lipopolysaccharide biosynthesis.</text>
</comment>
<comment type="similarity">
    <text evidence="1">Belongs to the polysaccharide deacetylase family. ArnD deformylase subfamily.</text>
</comment>
<sequence length="299" mass="33069">MTKVGLRIDVDTLRGTREGVPRLLATLHRQGVQASFFFSVGPDNMGRHLWRLIRPRFLWKMLRSNAASLYGWDILLAGTAWPGKNIGNANAGIIRETATYHETGLHAWDHHAWQTHSGHWSIRQLEEDIARGITALEAIIGKPVTCSAAAGWRADGRVVRAKEPFNLRYNSDCRGTTLFRPLLMPGQTGTPQIPVTLPTWDEVIGPAVQAQSFNTWIISRMLQDKGTPVYTIHAEVEGIVHQPLFEDLLVRARDAGITFCPLGELLPTSPESLPLGQIVRGHIPGREGWLGCQQAASAS</sequence>
<proteinExistence type="inferred from homology"/>
<accession>B5RCC5</accession>
<gene>
    <name evidence="1" type="primary">arnD</name>
    <name type="ordered locus">SG2329</name>
</gene>
<dbReference type="EC" id="3.5.1.n3" evidence="1"/>
<dbReference type="EMBL" id="AM933173">
    <property type="protein sequence ID" value="CAR38159.1"/>
    <property type="molecule type" value="Genomic_DNA"/>
</dbReference>
<dbReference type="RefSeq" id="WP_000169773.1">
    <property type="nucleotide sequence ID" value="NC_011274.1"/>
</dbReference>
<dbReference type="SMR" id="B5RCC5"/>
<dbReference type="KEGG" id="seg:SG2329"/>
<dbReference type="HOGENOM" id="CLU_084199_0_0_6"/>
<dbReference type="UniPathway" id="UPA00030"/>
<dbReference type="UniPathway" id="UPA00036">
    <property type="reaction ID" value="UER00496"/>
</dbReference>
<dbReference type="Proteomes" id="UP000008321">
    <property type="component" value="Chromosome"/>
</dbReference>
<dbReference type="GO" id="GO:0016020">
    <property type="term" value="C:membrane"/>
    <property type="evidence" value="ECO:0007669"/>
    <property type="project" value="GOC"/>
</dbReference>
<dbReference type="GO" id="GO:0016811">
    <property type="term" value="F:hydrolase activity, acting on carbon-nitrogen (but not peptide) bonds, in linear amides"/>
    <property type="evidence" value="ECO:0007669"/>
    <property type="project" value="UniProtKB-UniRule"/>
</dbReference>
<dbReference type="GO" id="GO:0036108">
    <property type="term" value="P:4-amino-4-deoxy-alpha-L-arabinopyranosyl undecaprenyl phosphate biosynthetic process"/>
    <property type="evidence" value="ECO:0007669"/>
    <property type="project" value="UniProtKB-UniRule"/>
</dbReference>
<dbReference type="GO" id="GO:0009245">
    <property type="term" value="P:lipid A biosynthetic process"/>
    <property type="evidence" value="ECO:0007669"/>
    <property type="project" value="UniProtKB-UniRule"/>
</dbReference>
<dbReference type="GO" id="GO:0009103">
    <property type="term" value="P:lipopolysaccharide biosynthetic process"/>
    <property type="evidence" value="ECO:0007669"/>
    <property type="project" value="UniProtKB-UniRule"/>
</dbReference>
<dbReference type="GO" id="GO:0046677">
    <property type="term" value="P:response to antibiotic"/>
    <property type="evidence" value="ECO:0007669"/>
    <property type="project" value="UniProtKB-KW"/>
</dbReference>
<dbReference type="Gene3D" id="3.20.20.370">
    <property type="entry name" value="Glycoside hydrolase/deacetylase"/>
    <property type="match status" value="1"/>
</dbReference>
<dbReference type="HAMAP" id="MF_01870">
    <property type="entry name" value="ArnD"/>
    <property type="match status" value="1"/>
</dbReference>
<dbReference type="InterPro" id="IPR023557">
    <property type="entry name" value="ArnD"/>
</dbReference>
<dbReference type="InterPro" id="IPR011330">
    <property type="entry name" value="Glyco_hydro/deAcase_b/a-brl"/>
</dbReference>
<dbReference type="InterPro" id="IPR002509">
    <property type="entry name" value="NODB_dom"/>
</dbReference>
<dbReference type="InterPro" id="IPR050248">
    <property type="entry name" value="Polysacc_deacetylase_ArnD"/>
</dbReference>
<dbReference type="NCBIfam" id="NF011923">
    <property type="entry name" value="PRK15394.1"/>
    <property type="match status" value="1"/>
</dbReference>
<dbReference type="PANTHER" id="PTHR10587:SF137">
    <property type="entry name" value="4-DEOXY-4-FORMAMIDO-L-ARABINOSE-PHOSPHOUNDECAPRENOL DEFORMYLASE ARND-RELATED"/>
    <property type="match status" value="1"/>
</dbReference>
<dbReference type="PANTHER" id="PTHR10587">
    <property type="entry name" value="GLYCOSYL TRANSFERASE-RELATED"/>
    <property type="match status" value="1"/>
</dbReference>
<dbReference type="Pfam" id="PF01522">
    <property type="entry name" value="Polysacc_deac_1"/>
    <property type="match status" value="1"/>
</dbReference>
<dbReference type="SUPFAM" id="SSF88713">
    <property type="entry name" value="Glycoside hydrolase/deacetylase"/>
    <property type="match status" value="1"/>
</dbReference>
<dbReference type="PROSITE" id="PS51677">
    <property type="entry name" value="NODB"/>
    <property type="match status" value="1"/>
</dbReference>
<organism>
    <name type="scientific">Salmonella gallinarum (strain 287/91 / NCTC 13346)</name>
    <dbReference type="NCBI Taxonomy" id="550538"/>
    <lineage>
        <taxon>Bacteria</taxon>
        <taxon>Pseudomonadati</taxon>
        <taxon>Pseudomonadota</taxon>
        <taxon>Gammaproteobacteria</taxon>
        <taxon>Enterobacterales</taxon>
        <taxon>Enterobacteriaceae</taxon>
        <taxon>Salmonella</taxon>
    </lineage>
</organism>
<feature type="chain" id="PRO_0000383531" description="Probable 4-deoxy-4-formamido-L-arabinose-phosphoundecaprenol deformylase ArnD">
    <location>
        <begin position="1"/>
        <end position="299"/>
    </location>
</feature>
<feature type="domain" description="NodB homology" evidence="1">
    <location>
        <begin position="2"/>
        <end position="260"/>
    </location>
</feature>
<name>ARND_SALG2</name>
<keyword id="KW-0046">Antibiotic resistance</keyword>
<keyword id="KW-0378">Hydrolase</keyword>
<keyword id="KW-0441">Lipid A biosynthesis</keyword>
<keyword id="KW-0444">Lipid biosynthesis</keyword>
<keyword id="KW-0443">Lipid metabolism</keyword>
<keyword id="KW-0448">Lipopolysaccharide biosynthesis</keyword>
<evidence type="ECO:0000255" key="1">
    <source>
        <dbReference type="HAMAP-Rule" id="MF_01870"/>
    </source>
</evidence>
<reference key="1">
    <citation type="journal article" date="2008" name="Genome Res.">
        <title>Comparative genome analysis of Salmonella enteritidis PT4 and Salmonella gallinarum 287/91 provides insights into evolutionary and host adaptation pathways.</title>
        <authorList>
            <person name="Thomson N.R."/>
            <person name="Clayton D.J."/>
            <person name="Windhorst D."/>
            <person name="Vernikos G."/>
            <person name="Davidson S."/>
            <person name="Churcher C."/>
            <person name="Quail M.A."/>
            <person name="Stevens M."/>
            <person name="Jones M.A."/>
            <person name="Watson M."/>
            <person name="Barron A."/>
            <person name="Layton A."/>
            <person name="Pickard D."/>
            <person name="Kingsley R.A."/>
            <person name="Bignell A."/>
            <person name="Clark L."/>
            <person name="Harris B."/>
            <person name="Ormond D."/>
            <person name="Abdellah Z."/>
            <person name="Brooks K."/>
            <person name="Cherevach I."/>
            <person name="Chillingworth T."/>
            <person name="Woodward J."/>
            <person name="Norberczak H."/>
            <person name="Lord A."/>
            <person name="Arrowsmith C."/>
            <person name="Jagels K."/>
            <person name="Moule S."/>
            <person name="Mungall K."/>
            <person name="Saunders M."/>
            <person name="Whitehead S."/>
            <person name="Chabalgoity J.A."/>
            <person name="Maskell D."/>
            <person name="Humphreys T."/>
            <person name="Roberts M."/>
            <person name="Barrow P.A."/>
            <person name="Dougan G."/>
            <person name="Parkhill J."/>
        </authorList>
    </citation>
    <scope>NUCLEOTIDE SEQUENCE [LARGE SCALE GENOMIC DNA]</scope>
    <source>
        <strain>287/91 / NCTC 13346</strain>
    </source>
</reference>